<accession>Q1H075</accession>
<feature type="chain" id="PRO_1000005656" description="Beta-hexosaminidase">
    <location>
        <begin position="1"/>
        <end position="349"/>
    </location>
</feature>
<feature type="active site" description="Proton donor/acceptor" evidence="1">
    <location>
        <position position="181"/>
    </location>
</feature>
<feature type="active site" description="Nucleophile" evidence="1">
    <location>
        <position position="252"/>
    </location>
</feature>
<feature type="binding site" evidence="1">
    <location>
        <position position="64"/>
    </location>
    <ligand>
        <name>substrate</name>
    </ligand>
</feature>
<feature type="binding site" evidence="1">
    <location>
        <position position="72"/>
    </location>
    <ligand>
        <name>substrate</name>
    </ligand>
</feature>
<feature type="binding site" evidence="1">
    <location>
        <position position="138"/>
    </location>
    <ligand>
        <name>substrate</name>
    </ligand>
</feature>
<feature type="binding site" evidence="1">
    <location>
        <begin position="168"/>
        <end position="169"/>
    </location>
    <ligand>
        <name>substrate</name>
    </ligand>
</feature>
<feature type="site" description="Important for catalytic activity" evidence="1">
    <location>
        <position position="179"/>
    </location>
</feature>
<organism>
    <name type="scientific">Methylobacillus flagellatus (strain ATCC 51484 / DSM 6875 / VKM B-1610 / KT)</name>
    <dbReference type="NCBI Taxonomy" id="265072"/>
    <lineage>
        <taxon>Bacteria</taxon>
        <taxon>Pseudomonadati</taxon>
        <taxon>Pseudomonadota</taxon>
        <taxon>Betaproteobacteria</taxon>
        <taxon>Nitrosomonadales</taxon>
        <taxon>Methylophilaceae</taxon>
        <taxon>Methylobacillus</taxon>
    </lineage>
</organism>
<keyword id="KW-0131">Cell cycle</keyword>
<keyword id="KW-0132">Cell division</keyword>
<keyword id="KW-0133">Cell shape</keyword>
<keyword id="KW-0961">Cell wall biogenesis/degradation</keyword>
<keyword id="KW-0963">Cytoplasm</keyword>
<keyword id="KW-0326">Glycosidase</keyword>
<keyword id="KW-0378">Hydrolase</keyword>
<keyword id="KW-0573">Peptidoglycan synthesis</keyword>
<keyword id="KW-1185">Reference proteome</keyword>
<protein>
    <recommendedName>
        <fullName evidence="1">Beta-hexosaminidase</fullName>
        <ecNumber evidence="1">3.2.1.52</ecNumber>
    </recommendedName>
    <alternativeName>
        <fullName evidence="1">Beta-N-acetylhexosaminidase</fullName>
    </alternativeName>
    <alternativeName>
        <fullName evidence="1">N-acetyl-beta-glucosaminidase</fullName>
    </alternativeName>
</protein>
<sequence length="349" mass="38596">MTLGPIMLDVVGTELTQEDIRRIRHPLVGGVILFARNFESPAQLKALTDSIHAVRQPPLLIAVDHEGGRVQRFREGFTRIPPMREFGKIWDEHPRKARQLAEEAGWIIAAELRAHGIDFSFTPVLDMDYGESQVIGDRAFHGDRQAINELAFSLMQGLKRGGMAAVGKHFPGHGYVVADSHVAIPVDERDFDQIASTDMQTFRQLIDDGIQAIMPAHVIYPKVDNKPAGFSERWLQKVLRQRLGFNGVIFSDDLSMEGAGVVGDVTQRALAALNAGCDMVLLCNQPDKADELLANLKWDIQAQSLARLARMHGGRHPSSMVALHEDPDFMHAVHRVGQVGKADGDLPFA</sequence>
<gene>
    <name evidence="1" type="primary">nagZ</name>
    <name type="ordered locus">Mfla_1845</name>
</gene>
<dbReference type="EC" id="3.2.1.52" evidence="1"/>
<dbReference type="EMBL" id="CP000284">
    <property type="protein sequence ID" value="ABE50112.1"/>
    <property type="molecule type" value="Genomic_DNA"/>
</dbReference>
<dbReference type="RefSeq" id="WP_011480066.1">
    <property type="nucleotide sequence ID" value="NC_007947.1"/>
</dbReference>
<dbReference type="SMR" id="Q1H075"/>
<dbReference type="STRING" id="265072.Mfla_1845"/>
<dbReference type="CAZy" id="GH3">
    <property type="family name" value="Glycoside Hydrolase Family 3"/>
</dbReference>
<dbReference type="KEGG" id="mfa:Mfla_1845"/>
<dbReference type="eggNOG" id="COG1472">
    <property type="taxonomic scope" value="Bacteria"/>
</dbReference>
<dbReference type="HOGENOM" id="CLU_008392_0_0_4"/>
<dbReference type="OrthoDB" id="9786661at2"/>
<dbReference type="UniPathway" id="UPA00544"/>
<dbReference type="Proteomes" id="UP000002440">
    <property type="component" value="Chromosome"/>
</dbReference>
<dbReference type="GO" id="GO:0005737">
    <property type="term" value="C:cytoplasm"/>
    <property type="evidence" value="ECO:0007669"/>
    <property type="project" value="UniProtKB-SubCell"/>
</dbReference>
<dbReference type="GO" id="GO:0004563">
    <property type="term" value="F:beta-N-acetylhexosaminidase activity"/>
    <property type="evidence" value="ECO:0007669"/>
    <property type="project" value="UniProtKB-UniRule"/>
</dbReference>
<dbReference type="GO" id="GO:0005975">
    <property type="term" value="P:carbohydrate metabolic process"/>
    <property type="evidence" value="ECO:0007669"/>
    <property type="project" value="InterPro"/>
</dbReference>
<dbReference type="GO" id="GO:0051301">
    <property type="term" value="P:cell division"/>
    <property type="evidence" value="ECO:0007669"/>
    <property type="project" value="UniProtKB-KW"/>
</dbReference>
<dbReference type="GO" id="GO:0071555">
    <property type="term" value="P:cell wall organization"/>
    <property type="evidence" value="ECO:0007669"/>
    <property type="project" value="UniProtKB-KW"/>
</dbReference>
<dbReference type="GO" id="GO:0009252">
    <property type="term" value="P:peptidoglycan biosynthetic process"/>
    <property type="evidence" value="ECO:0007669"/>
    <property type="project" value="UniProtKB-KW"/>
</dbReference>
<dbReference type="GO" id="GO:0009254">
    <property type="term" value="P:peptidoglycan turnover"/>
    <property type="evidence" value="ECO:0007669"/>
    <property type="project" value="UniProtKB-UniRule"/>
</dbReference>
<dbReference type="GO" id="GO:0008360">
    <property type="term" value="P:regulation of cell shape"/>
    <property type="evidence" value="ECO:0007669"/>
    <property type="project" value="UniProtKB-KW"/>
</dbReference>
<dbReference type="FunFam" id="3.20.20.300:FF:000001">
    <property type="entry name" value="Beta-hexosaminidase"/>
    <property type="match status" value="1"/>
</dbReference>
<dbReference type="Gene3D" id="3.20.20.300">
    <property type="entry name" value="Glycoside hydrolase, family 3, N-terminal domain"/>
    <property type="match status" value="1"/>
</dbReference>
<dbReference type="HAMAP" id="MF_00364">
    <property type="entry name" value="NagZ"/>
    <property type="match status" value="1"/>
</dbReference>
<dbReference type="InterPro" id="IPR022956">
    <property type="entry name" value="Beta_hexosaminidase_bac"/>
</dbReference>
<dbReference type="InterPro" id="IPR019800">
    <property type="entry name" value="Glyco_hydro_3_AS"/>
</dbReference>
<dbReference type="InterPro" id="IPR001764">
    <property type="entry name" value="Glyco_hydro_3_N"/>
</dbReference>
<dbReference type="InterPro" id="IPR036962">
    <property type="entry name" value="Glyco_hydro_3_N_sf"/>
</dbReference>
<dbReference type="InterPro" id="IPR017853">
    <property type="entry name" value="Glycoside_hydrolase_SF"/>
</dbReference>
<dbReference type="InterPro" id="IPR050226">
    <property type="entry name" value="NagZ_Beta-hexosaminidase"/>
</dbReference>
<dbReference type="NCBIfam" id="NF003740">
    <property type="entry name" value="PRK05337.1"/>
    <property type="match status" value="1"/>
</dbReference>
<dbReference type="PANTHER" id="PTHR30480:SF13">
    <property type="entry name" value="BETA-HEXOSAMINIDASE"/>
    <property type="match status" value="1"/>
</dbReference>
<dbReference type="PANTHER" id="PTHR30480">
    <property type="entry name" value="BETA-HEXOSAMINIDASE-RELATED"/>
    <property type="match status" value="1"/>
</dbReference>
<dbReference type="Pfam" id="PF00933">
    <property type="entry name" value="Glyco_hydro_3"/>
    <property type="match status" value="1"/>
</dbReference>
<dbReference type="SUPFAM" id="SSF51445">
    <property type="entry name" value="(Trans)glycosidases"/>
    <property type="match status" value="1"/>
</dbReference>
<dbReference type="PROSITE" id="PS00775">
    <property type="entry name" value="GLYCOSYL_HYDROL_F3"/>
    <property type="match status" value="1"/>
</dbReference>
<evidence type="ECO:0000255" key="1">
    <source>
        <dbReference type="HAMAP-Rule" id="MF_00364"/>
    </source>
</evidence>
<proteinExistence type="inferred from homology"/>
<reference key="1">
    <citation type="submission" date="2006-03" db="EMBL/GenBank/DDBJ databases">
        <title>Complete sequence of Methylobacillus flagellatus KT.</title>
        <authorList>
            <consortium name="US DOE Joint Genome Institute"/>
            <person name="Copeland A."/>
            <person name="Lucas S."/>
            <person name="Lapidus A."/>
            <person name="Barry K."/>
            <person name="Detter J.C."/>
            <person name="Glavina del Rio T."/>
            <person name="Hammon N."/>
            <person name="Israni S."/>
            <person name="Dalin E."/>
            <person name="Tice H."/>
            <person name="Pitluck S."/>
            <person name="Brettin T."/>
            <person name="Bruce D."/>
            <person name="Han C."/>
            <person name="Tapia R."/>
            <person name="Saunders E."/>
            <person name="Gilna P."/>
            <person name="Schmutz J."/>
            <person name="Larimer F."/>
            <person name="Land M."/>
            <person name="Kyrpides N."/>
            <person name="Anderson I."/>
            <person name="Richardson P."/>
        </authorList>
    </citation>
    <scope>NUCLEOTIDE SEQUENCE [LARGE SCALE GENOMIC DNA]</scope>
    <source>
        <strain>ATCC 51484 / DSM 6875 / VKM B-1610 / KT</strain>
    </source>
</reference>
<name>NAGZ_METFK</name>
<comment type="function">
    <text evidence="1">Plays a role in peptidoglycan recycling by cleaving the terminal beta-1,4-linked N-acetylglucosamine (GlcNAc) from peptide-linked peptidoglycan fragments, giving rise to free GlcNAc, anhydro-N-acetylmuramic acid and anhydro-N-acetylmuramic acid-linked peptides.</text>
</comment>
<comment type="catalytic activity">
    <reaction evidence="1">
        <text>Hydrolysis of terminal non-reducing N-acetyl-D-hexosamine residues in N-acetyl-beta-D-hexosaminides.</text>
        <dbReference type="EC" id="3.2.1.52"/>
    </reaction>
</comment>
<comment type="pathway">
    <text evidence="1">Cell wall biogenesis; peptidoglycan recycling.</text>
</comment>
<comment type="subcellular location">
    <subcellularLocation>
        <location evidence="1">Cytoplasm</location>
    </subcellularLocation>
</comment>
<comment type="similarity">
    <text evidence="1">Belongs to the glycosyl hydrolase 3 family. NagZ subfamily.</text>
</comment>